<feature type="chain" id="PRO_0000311376" description="Microtubule-associated protein 1S">
    <location>
        <begin position="1"/>
        <end position="1066"/>
    </location>
</feature>
<feature type="chain" id="PRO_0000311377" description="MAP1S heavy chain">
    <location>
        <begin position="1"/>
        <end position="836"/>
    </location>
</feature>
<feature type="chain" id="PRO_0000311378" description="MAP1S light chain">
    <location>
        <begin position="837"/>
        <end position="1066"/>
    </location>
</feature>
<feature type="region of interest" description="Necessary for the microtubule-organizing center localization" evidence="1">
    <location>
        <begin position="1"/>
        <end position="804"/>
    </location>
</feature>
<feature type="region of interest" description="Disordered" evidence="5">
    <location>
        <begin position="462"/>
        <end position="707"/>
    </location>
</feature>
<feature type="region of interest" description="Necessary for interaction with RASSF1" evidence="1">
    <location>
        <begin position="676"/>
        <end position="1066"/>
    </location>
</feature>
<feature type="region of interest" description="Necessary for association with microtubules" evidence="1">
    <location>
        <begin position="720"/>
        <end position="973"/>
    </location>
</feature>
<feature type="region of interest" description="Disordered" evidence="5">
    <location>
        <begin position="758"/>
        <end position="950"/>
    </location>
</feature>
<feature type="region of interest" description="Necessary for association with actin" evidence="1">
    <location>
        <begin position="967"/>
        <end position="1066"/>
    </location>
</feature>
<feature type="region of interest" description="Necessary for the mitochondrial aggregation and genome destruction" evidence="1">
    <location>
        <begin position="974"/>
        <end position="998"/>
    </location>
</feature>
<feature type="compositionally biased region" description="Basic and acidic residues" evidence="5">
    <location>
        <begin position="466"/>
        <end position="487"/>
    </location>
</feature>
<feature type="compositionally biased region" description="Basic and acidic residues" evidence="5">
    <location>
        <begin position="500"/>
        <end position="530"/>
    </location>
</feature>
<feature type="compositionally biased region" description="Polar residues" evidence="5">
    <location>
        <begin position="597"/>
        <end position="614"/>
    </location>
</feature>
<feature type="compositionally biased region" description="Low complexity" evidence="5">
    <location>
        <begin position="656"/>
        <end position="671"/>
    </location>
</feature>
<feature type="compositionally biased region" description="Polar residues" evidence="5">
    <location>
        <begin position="766"/>
        <end position="775"/>
    </location>
</feature>
<feature type="compositionally biased region" description="Polar residues" evidence="5">
    <location>
        <begin position="790"/>
        <end position="803"/>
    </location>
</feature>
<feature type="compositionally biased region" description="Pro residues" evidence="5">
    <location>
        <begin position="832"/>
        <end position="845"/>
    </location>
</feature>
<feature type="compositionally biased region" description="Low complexity" evidence="5">
    <location>
        <begin position="880"/>
        <end position="894"/>
    </location>
</feature>
<feature type="compositionally biased region" description="Low complexity" evidence="5">
    <location>
        <begin position="933"/>
        <end position="949"/>
    </location>
</feature>
<feature type="modified residue" description="Phosphoserine" evidence="3">
    <location>
        <position position="320"/>
    </location>
</feature>
<feature type="modified residue" description="Phosphoserine" evidence="3">
    <location>
        <position position="472"/>
    </location>
</feature>
<feature type="modified residue" description="Phosphoserine" evidence="3">
    <location>
        <position position="582"/>
    </location>
</feature>
<feature type="modified residue" description="Phosphothreonine" evidence="3">
    <location>
        <position position="647"/>
    </location>
</feature>
<feature type="modified residue" description="Phosphoserine" evidence="3">
    <location>
        <position position="649"/>
    </location>
</feature>
<feature type="modified residue" description="Phosphoserine" evidence="2">
    <location>
        <position position="660"/>
    </location>
</feature>
<feature type="modified residue" description="Phosphoserine" evidence="3">
    <location>
        <position position="665"/>
    </location>
</feature>
<feature type="modified residue" description="Phosphoserine" evidence="3">
    <location>
        <position position="667"/>
    </location>
</feature>
<feature type="modified residue" description="Phosphoserine" evidence="4">
    <location>
        <position position="737"/>
    </location>
</feature>
<feature type="modified residue" description="Phosphoserine" evidence="3">
    <location>
        <position position="765"/>
    </location>
</feature>
<feature type="modified residue" description="Phosphoserine" evidence="3">
    <location>
        <position position="816"/>
    </location>
</feature>
<sequence length="1066" mass="112472">MAATVAGSGAAEVPSSLLLVVGGECGCRGLLAYVLEELERGIRSWDIDPGVCSLDEQLKVFVSRHSATFSSIVKGQRSLHHRGDTLETLVLLNPSDKSLCDELRNLLLDTASHKLLVLAGPCLEETGELLLQTGGFSPRHFLQVLGDKEIRDLLASTPPPAAPPKLTITCPTFGDWARLAPEVPGLQGVLHLRLNPPVQLPASEGLREFLEYVAESLEPPSPFELLEPPASVGLLRLARPCCYIFPGGLGDAAFFAVNGFTVLVNGGSNPKSSFWKLVRHLDRVDAVLVTHAGADSLPGLNSLLRRKLAERDEAAAGGGSGDDRLRRLISPNLGVVFLNARAAASRLVRGEDEAELALSLLSQLGITPVPLNRGPLPAEPTVLFQKMGVGRLDMYVLHPPSAATTDHTLASVCALLVWHPAGPSEKVVRVLFPGCTPPARLLDGLVHLQHLGFLREPVVTPQDMAGPRRAESKESVASRDSLRREGRTTVPSRPTQERPGVARKDSPRTEAPRRAEKEARPSREVKKDPRPSAPRTQPREVRRAASAVVSGKNVGAQVAPKTRRAPNTPRPGVPPAENGPRSPPSFRSGEASPPTEACSSPAPQLVATPSQESSLDLGLSPAGEEGGSLEEKTLELLLAASTPEPCTPSPAGAQQGPTESSGPLSLSPLRGGEPGPDASPTVTTPSLPAEVGSPHSTEVDESLSVSFEQVLPPPAAAASEAGLSLPLCGPRVRRSASPHDVDLCLVSPCEFEHRKAVPMAPAPVSPGSSNDSSARSQERAGAPGGAEETPPTSVSESLPTLSDSDPLPAAPGTADSDEDTEGFGVPRRDPLPDPLKIPPPLPTPPSICMVDPEMLPPEQARLKGGGSRTRKPLTRPSSGTTPPKATPVTAAKIKGLASGDRASRPLSARSEPSDKGNRASLSRKPSVPKTTTRGPSGSAGSRSGGSAAPPGSPVYLDLAYLPSGGSARLVDEEFFRRVRALCYVISGQDQHKEEGMRAVLDALLAGKQQWDRQLQVTLIPTFDSVAMHEWYEETHTRHQALGITVLGSNSTVSMQDEAFPACKVEF</sequence>
<dbReference type="EMBL" id="BC149678">
    <property type="protein sequence ID" value="AAI49679.1"/>
    <property type="molecule type" value="mRNA"/>
</dbReference>
<dbReference type="RefSeq" id="NP_001095584.1">
    <property type="nucleotide sequence ID" value="NM_001102114.1"/>
</dbReference>
<dbReference type="FunCoup" id="A6QQ70">
    <property type="interactions" value="755"/>
</dbReference>
<dbReference type="STRING" id="9913.ENSBTAP00000019513"/>
<dbReference type="PaxDb" id="9913-ENSBTAP00000019513"/>
<dbReference type="GeneID" id="527829"/>
<dbReference type="KEGG" id="bta:527829"/>
<dbReference type="CTD" id="55201"/>
<dbReference type="eggNOG" id="KOG3592">
    <property type="taxonomic scope" value="Eukaryota"/>
</dbReference>
<dbReference type="InParanoid" id="A6QQ70"/>
<dbReference type="OrthoDB" id="5371837at2759"/>
<dbReference type="Proteomes" id="UP000009136">
    <property type="component" value="Unplaced"/>
</dbReference>
<dbReference type="GO" id="GO:0005829">
    <property type="term" value="C:cytosol"/>
    <property type="evidence" value="ECO:0000318"/>
    <property type="project" value="GO_Central"/>
</dbReference>
<dbReference type="GO" id="GO:0030425">
    <property type="term" value="C:dendrite"/>
    <property type="evidence" value="ECO:0000318"/>
    <property type="project" value="GO_Central"/>
</dbReference>
<dbReference type="GO" id="GO:0005874">
    <property type="term" value="C:microtubule"/>
    <property type="evidence" value="ECO:0000250"/>
    <property type="project" value="UniProtKB"/>
</dbReference>
<dbReference type="GO" id="GO:0005875">
    <property type="term" value="C:microtubule associated complex"/>
    <property type="evidence" value="ECO:0000318"/>
    <property type="project" value="GO_Central"/>
</dbReference>
<dbReference type="GO" id="GO:0043025">
    <property type="term" value="C:neuronal cell body"/>
    <property type="evidence" value="ECO:0000318"/>
    <property type="project" value="GO_Central"/>
</dbReference>
<dbReference type="GO" id="GO:0005634">
    <property type="term" value="C:nucleus"/>
    <property type="evidence" value="ECO:0007669"/>
    <property type="project" value="UniProtKB-SubCell"/>
</dbReference>
<dbReference type="GO" id="GO:0005819">
    <property type="term" value="C:spindle"/>
    <property type="evidence" value="ECO:0000250"/>
    <property type="project" value="UniProtKB"/>
</dbReference>
<dbReference type="GO" id="GO:0045202">
    <property type="term" value="C:synapse"/>
    <property type="evidence" value="ECO:0000318"/>
    <property type="project" value="GO_Central"/>
</dbReference>
<dbReference type="GO" id="GO:0003779">
    <property type="term" value="F:actin binding"/>
    <property type="evidence" value="ECO:0000318"/>
    <property type="project" value="GO_Central"/>
</dbReference>
<dbReference type="GO" id="GO:0003677">
    <property type="term" value="F:DNA binding"/>
    <property type="evidence" value="ECO:0007669"/>
    <property type="project" value="UniProtKB-KW"/>
</dbReference>
<dbReference type="GO" id="GO:0008017">
    <property type="term" value="F:microtubule binding"/>
    <property type="evidence" value="ECO:0000318"/>
    <property type="project" value="GO_Central"/>
</dbReference>
<dbReference type="GO" id="GO:0006915">
    <property type="term" value="P:apoptotic process"/>
    <property type="evidence" value="ECO:0007669"/>
    <property type="project" value="UniProtKB-KW"/>
</dbReference>
<dbReference type="GO" id="GO:0007409">
    <property type="term" value="P:axonogenesis"/>
    <property type="evidence" value="ECO:0000318"/>
    <property type="project" value="GO_Central"/>
</dbReference>
<dbReference type="GO" id="GO:0016358">
    <property type="term" value="P:dendrite development"/>
    <property type="evidence" value="ECO:0000318"/>
    <property type="project" value="GO_Central"/>
</dbReference>
<dbReference type="GO" id="GO:0000226">
    <property type="term" value="P:microtubule cytoskeleton organization"/>
    <property type="evidence" value="ECO:0000318"/>
    <property type="project" value="GO_Central"/>
</dbReference>
<dbReference type="GO" id="GO:0031114">
    <property type="term" value="P:regulation of microtubule depolymerization"/>
    <property type="evidence" value="ECO:0000318"/>
    <property type="project" value="GO_Central"/>
</dbReference>
<dbReference type="InterPro" id="IPR026074">
    <property type="entry name" value="MAP1"/>
</dbReference>
<dbReference type="InterPro" id="IPR056617">
    <property type="entry name" value="MAP1B/S_N"/>
</dbReference>
<dbReference type="PANTHER" id="PTHR13843">
    <property type="entry name" value="MICROTUBULE-ASSOCIATED PROTEIN"/>
    <property type="match status" value="1"/>
</dbReference>
<dbReference type="PANTHER" id="PTHR13843:SF11">
    <property type="entry name" value="MICROTUBULE-ASSOCIATED PROTEIN 1S"/>
    <property type="match status" value="1"/>
</dbReference>
<dbReference type="Pfam" id="PF23415">
    <property type="entry name" value="MAPB1_N"/>
    <property type="match status" value="1"/>
</dbReference>
<dbReference type="Pfam" id="PF25281">
    <property type="entry name" value="MBL_MAP1B"/>
    <property type="match status" value="1"/>
</dbReference>
<evidence type="ECO:0000250" key="1"/>
<evidence type="ECO:0000250" key="2">
    <source>
        <dbReference type="UniProtKB" id="P0C5W1"/>
    </source>
</evidence>
<evidence type="ECO:0000250" key="3">
    <source>
        <dbReference type="UniProtKB" id="Q66K74"/>
    </source>
</evidence>
<evidence type="ECO:0000250" key="4">
    <source>
        <dbReference type="UniProtKB" id="Q8C052"/>
    </source>
</evidence>
<evidence type="ECO:0000256" key="5">
    <source>
        <dbReference type="SAM" id="MobiDB-lite"/>
    </source>
</evidence>
<evidence type="ECO:0000305" key="6"/>
<proteinExistence type="evidence at transcript level"/>
<accession>A6QQ70</accession>
<keyword id="KW-0053">Apoptosis</keyword>
<keyword id="KW-0963">Cytoplasm</keyword>
<keyword id="KW-0206">Cytoskeleton</keyword>
<keyword id="KW-0238">DNA-binding</keyword>
<keyword id="KW-0493">Microtubule</keyword>
<keyword id="KW-0539">Nucleus</keyword>
<keyword id="KW-0597">Phosphoprotein</keyword>
<keyword id="KW-1185">Reference proteome</keyword>
<protein>
    <recommendedName>
        <fullName>Microtubule-associated protein 1S</fullName>
        <shortName>MAP-1S</shortName>
    </recommendedName>
    <component>
        <recommendedName>
            <fullName>MAP1S heavy chain</fullName>
        </recommendedName>
    </component>
    <component>
        <recommendedName>
            <fullName>MAP1S light chain</fullName>
        </recommendedName>
    </component>
</protein>
<comment type="function">
    <text evidence="1">Microtubule-associated protein that mediates aggregation of mitochondria resulting in cell death and genomic destruction (MAGD). Plays a role in anchoring the microtubule organizing center to the centrosomes. Binds to DNA. Plays a role in apoptosis. Involved in the formation of microtubule bundles (By similarity).</text>
</comment>
<comment type="subunit">
    <text evidence="1">Heterodimer of a heavy and a light chain. Interacts with microtubules and actin. Both MAP1S heavy and light chains interact with microtubules. MAP1S light chain interacts with actin. Interacts (via C-terminus) with GAN (via Kelch domains). Interacts with ESR1, LRPPRC, RASSF1, microtubules and VCY2 (By similarity). Interacts with ESR1, LRPPRC, RASSF1, microtubules and VCY2. Interacts with WDR47 (via N-terminus of light chain) (By similarity).</text>
</comment>
<comment type="subcellular location">
    <subcellularLocation>
        <location>Nucleus</location>
    </subcellularLocation>
    <subcellularLocation>
        <location>Cytoplasm</location>
        <location>Cytosol</location>
    </subcellularLocation>
    <subcellularLocation>
        <location evidence="3">Cytoplasm</location>
        <location evidence="3">Cytoskeleton</location>
    </subcellularLocation>
    <subcellularLocation>
        <location evidence="3">Cytoplasm</location>
        <location evidence="3">Cytoskeleton</location>
        <location evidence="3">Spindle</location>
    </subcellularLocation>
    <text evidence="1">Detected in perinuclear punctate network corresponding to mitochondrial aggregates and in the nucleus in cells exhibiting apoptosis. Associated specifically with microtubules stabilized by paclitaxel and colocalizes with RASSF1. In interphase cells, shows a diffuse cytoplasmic staining with partial localization to the microtubules. During the different stages of mitosis detected at the spindle microtubules. Detected in filopodia-like protrusions and synapses (By similarity).</text>
</comment>
<comment type="domain">
    <text evidence="1">The N-terminus of the heavy chain associates with the C-terminus of the light chain to form the heterodimer complex. Its C-terminal part of the heavy chain interacts with ESR1 (By similarity).</text>
</comment>
<comment type="similarity">
    <text evidence="6">Belongs to the MAP1 family.</text>
</comment>
<name>MAP1S_BOVIN</name>
<organism>
    <name type="scientific">Bos taurus</name>
    <name type="common">Bovine</name>
    <dbReference type="NCBI Taxonomy" id="9913"/>
    <lineage>
        <taxon>Eukaryota</taxon>
        <taxon>Metazoa</taxon>
        <taxon>Chordata</taxon>
        <taxon>Craniata</taxon>
        <taxon>Vertebrata</taxon>
        <taxon>Euteleostomi</taxon>
        <taxon>Mammalia</taxon>
        <taxon>Eutheria</taxon>
        <taxon>Laurasiatheria</taxon>
        <taxon>Artiodactyla</taxon>
        <taxon>Ruminantia</taxon>
        <taxon>Pecora</taxon>
        <taxon>Bovidae</taxon>
        <taxon>Bovinae</taxon>
        <taxon>Bos</taxon>
    </lineage>
</organism>
<reference key="1">
    <citation type="submission" date="2007-07" db="EMBL/GenBank/DDBJ databases">
        <authorList>
            <consortium name="NIH - Mammalian Gene Collection (MGC) project"/>
        </authorList>
    </citation>
    <scope>NUCLEOTIDE SEQUENCE [LARGE SCALE MRNA]</scope>
    <source>
        <strain>Crossbred X Angus</strain>
        <tissue>Liver</tissue>
    </source>
</reference>
<gene>
    <name type="primary">MAP1S</name>
</gene>